<dbReference type="EMBL" id="X65276">
    <property type="protein sequence ID" value="CAA46378.1"/>
    <property type="molecule type" value="Genomic_DNA"/>
</dbReference>
<dbReference type="EMBL" id="AE001437">
    <property type="protein sequence ID" value="AAK81630.1"/>
    <property type="molecule type" value="Genomic_DNA"/>
</dbReference>
<dbReference type="PIR" id="C97355">
    <property type="entry name" value="C97355"/>
</dbReference>
<dbReference type="RefSeq" id="NP_350290.1">
    <property type="nucleotide sequence ID" value="NC_003030.1"/>
</dbReference>
<dbReference type="SMR" id="Q04354"/>
<dbReference type="STRING" id="272562.CA_C3710"/>
<dbReference type="KEGG" id="cac:CA_C3710"/>
<dbReference type="PATRIC" id="fig|272562.8.peg.3899"/>
<dbReference type="eggNOG" id="COG4499">
    <property type="taxonomic scope" value="Bacteria"/>
</dbReference>
<dbReference type="HOGENOM" id="CLU_049737_1_0_9"/>
<dbReference type="OrthoDB" id="4975281at2"/>
<dbReference type="Proteomes" id="UP000000814">
    <property type="component" value="Chromosome"/>
</dbReference>
<dbReference type="Gene3D" id="1.10.510.10">
    <property type="entry name" value="Transferase(Phosphotransferase) domain 1"/>
    <property type="match status" value="1"/>
</dbReference>
<dbReference type="Gene3D" id="1.25.40.680">
    <property type="entry name" value="Type VII secretion system EssB, C-terminal-like domain"/>
    <property type="match status" value="1"/>
</dbReference>
<dbReference type="InterPro" id="IPR018778">
    <property type="entry name" value="T7SS_EssB"/>
</dbReference>
<dbReference type="InterPro" id="IPR042565">
    <property type="entry name" value="T7SS_EssB_C"/>
</dbReference>
<dbReference type="NCBIfam" id="TIGR03926">
    <property type="entry name" value="T7_EssB"/>
    <property type="match status" value="1"/>
</dbReference>
<dbReference type="Pfam" id="PF10140">
    <property type="entry name" value="YukC"/>
    <property type="match status" value="1"/>
</dbReference>
<organism>
    <name type="scientific">Clostridium acetobutylicum (strain ATCC 824 / DSM 792 / JCM 1419 / IAM 19013 / LMG 5710 / NBRC 13948 / NRRL B-527 / VKM B-1787 / 2291 / W)</name>
    <dbReference type="NCBI Taxonomy" id="272562"/>
    <lineage>
        <taxon>Bacteria</taxon>
        <taxon>Bacillati</taxon>
        <taxon>Bacillota</taxon>
        <taxon>Clostridia</taxon>
        <taxon>Eubacteriales</taxon>
        <taxon>Clostridiaceae</taxon>
        <taxon>Clostridium</taxon>
    </lineage>
</organism>
<reference key="1">
    <citation type="journal article" date="1993" name="J. Bacteriol.">
        <title>Sequence and molecular characterization of a DNA region encoding a small heat shock protein of Clostridium acetobutylicum.</title>
        <authorList>
            <person name="Sauer U."/>
            <person name="Duerre P."/>
        </authorList>
    </citation>
    <scope>NUCLEOTIDE SEQUENCE [GENOMIC DNA]</scope>
    <source>
        <strain>ATCC 824 / DSM 792 / JCM 1419 / IAM 19013 / LMG 5710 / NBRC 13948 / NRRL B-527 / VKM B-1787 / 2291 / W</strain>
    </source>
</reference>
<reference key="2">
    <citation type="journal article" date="2001" name="J. Bacteriol.">
        <title>Genome sequence and comparative analysis of the solvent-producing bacterium Clostridium acetobutylicum.</title>
        <authorList>
            <person name="Noelling J."/>
            <person name="Breton G."/>
            <person name="Omelchenko M.V."/>
            <person name="Makarova K.S."/>
            <person name="Zeng Q."/>
            <person name="Gibson R."/>
            <person name="Lee H.M."/>
            <person name="Dubois J."/>
            <person name="Qiu D."/>
            <person name="Hitti J."/>
            <person name="Wolf Y.I."/>
            <person name="Tatusov R.L."/>
            <person name="Sabathe F."/>
            <person name="Doucette-Stamm L.A."/>
            <person name="Soucaille P."/>
            <person name="Daly M.J."/>
            <person name="Bennett G.N."/>
            <person name="Koonin E.V."/>
            <person name="Smith D.R."/>
        </authorList>
    </citation>
    <scope>NUCLEOTIDE SEQUENCE [LARGE SCALE GENOMIC DNA]</scope>
    <source>
        <strain>ATCC 824 / DSM 792 / JCM 1419 / IAM 19013 / LMG 5710 / NBRC 13948 / NRRL B-527 / VKM B-1787 / 2291 / W</strain>
    </source>
</reference>
<name>Y3710_CLOAB</name>
<proteinExistence type="predicted"/>
<protein>
    <recommendedName>
        <fullName>Uncharacterized protein CA_C3710</fullName>
    </recommendedName>
</protein>
<feature type="chain" id="PRO_0000207114" description="Uncharacterized protein CA_C3710">
    <location>
        <begin position="1"/>
        <end position="371"/>
    </location>
</feature>
<keyword id="KW-1185">Reference proteome</keyword>
<sequence>MKISNSKTSLEFERNKDFFQVRLESTQFKEAVLKELSDKVIVNEDNETWVLSYPVPEAAKSLASATRLAKTRLERLKLAQKLATLSGLENQFKIPFLHPENILLMGETLFVVHFGLHKLLAPFDMTPVDFLKSYKALIFYIFNSKVPFESLVSGSLAMNDKFSQTINSFESTQEIAEFIDEELQKETEKINRNIAFVSKGRYRFFKYFGTLAIILALVLGWFTYYYYSNSQKQNAIITAQTDFLTNNYDKTQTDLQNYSPSKLPKSARYILAVSSVNLSDLTTTQKQAILNNISTKSDDNTLNYWVYSGRGDFKQALNLAQNLGDVQLTLLAYTNLYETTKLNTTMDGAKKQQLLDEYNKKIQELTKNLGK</sequence>
<accession>Q04354</accession>
<gene>
    <name type="ordered locus">CA_C3710</name>
</gene>